<organism>
    <name type="scientific">Chelativorans sp. (strain BNC1)</name>
    <dbReference type="NCBI Taxonomy" id="266779"/>
    <lineage>
        <taxon>Bacteria</taxon>
        <taxon>Pseudomonadati</taxon>
        <taxon>Pseudomonadota</taxon>
        <taxon>Alphaproteobacteria</taxon>
        <taxon>Hyphomicrobiales</taxon>
        <taxon>Phyllobacteriaceae</taxon>
        <taxon>Chelativorans</taxon>
    </lineage>
</organism>
<dbReference type="EC" id="1.1.1.94" evidence="1"/>
<dbReference type="EMBL" id="CP000390">
    <property type="protein sequence ID" value="ABG64576.1"/>
    <property type="molecule type" value="Genomic_DNA"/>
</dbReference>
<dbReference type="SMR" id="Q11DE9"/>
<dbReference type="STRING" id="266779.Meso_3204"/>
<dbReference type="KEGG" id="mes:Meso_3204"/>
<dbReference type="eggNOG" id="COG0240">
    <property type="taxonomic scope" value="Bacteria"/>
</dbReference>
<dbReference type="HOGENOM" id="CLU_033449_0_2_5"/>
<dbReference type="OrthoDB" id="9812273at2"/>
<dbReference type="UniPathway" id="UPA00940"/>
<dbReference type="GO" id="GO:0005829">
    <property type="term" value="C:cytosol"/>
    <property type="evidence" value="ECO:0007669"/>
    <property type="project" value="TreeGrafter"/>
</dbReference>
<dbReference type="GO" id="GO:0047952">
    <property type="term" value="F:glycerol-3-phosphate dehydrogenase [NAD(P)+] activity"/>
    <property type="evidence" value="ECO:0007669"/>
    <property type="project" value="UniProtKB-UniRule"/>
</dbReference>
<dbReference type="GO" id="GO:0051287">
    <property type="term" value="F:NAD binding"/>
    <property type="evidence" value="ECO:0007669"/>
    <property type="project" value="InterPro"/>
</dbReference>
<dbReference type="GO" id="GO:0005975">
    <property type="term" value="P:carbohydrate metabolic process"/>
    <property type="evidence" value="ECO:0007669"/>
    <property type="project" value="InterPro"/>
</dbReference>
<dbReference type="GO" id="GO:0046167">
    <property type="term" value="P:glycerol-3-phosphate biosynthetic process"/>
    <property type="evidence" value="ECO:0007669"/>
    <property type="project" value="UniProtKB-UniRule"/>
</dbReference>
<dbReference type="GO" id="GO:0046168">
    <property type="term" value="P:glycerol-3-phosphate catabolic process"/>
    <property type="evidence" value="ECO:0007669"/>
    <property type="project" value="InterPro"/>
</dbReference>
<dbReference type="GO" id="GO:0006650">
    <property type="term" value="P:glycerophospholipid metabolic process"/>
    <property type="evidence" value="ECO:0007669"/>
    <property type="project" value="UniProtKB-UniRule"/>
</dbReference>
<dbReference type="GO" id="GO:0008654">
    <property type="term" value="P:phospholipid biosynthetic process"/>
    <property type="evidence" value="ECO:0007669"/>
    <property type="project" value="UniProtKB-KW"/>
</dbReference>
<dbReference type="FunFam" id="3.40.50.720:FF:000019">
    <property type="entry name" value="Glycerol-3-phosphate dehydrogenase [NAD(P)+]"/>
    <property type="match status" value="1"/>
</dbReference>
<dbReference type="Gene3D" id="1.10.1040.10">
    <property type="entry name" value="N-(1-d-carboxylethyl)-l-norvaline Dehydrogenase, domain 2"/>
    <property type="match status" value="1"/>
</dbReference>
<dbReference type="Gene3D" id="3.40.50.720">
    <property type="entry name" value="NAD(P)-binding Rossmann-like Domain"/>
    <property type="match status" value="1"/>
</dbReference>
<dbReference type="HAMAP" id="MF_00394">
    <property type="entry name" value="NAD_Glyc3P_dehydrog"/>
    <property type="match status" value="1"/>
</dbReference>
<dbReference type="InterPro" id="IPR008927">
    <property type="entry name" value="6-PGluconate_DH-like_C_sf"/>
</dbReference>
<dbReference type="InterPro" id="IPR013328">
    <property type="entry name" value="6PGD_dom2"/>
</dbReference>
<dbReference type="InterPro" id="IPR006168">
    <property type="entry name" value="G3P_DH_NAD-dep"/>
</dbReference>
<dbReference type="InterPro" id="IPR006109">
    <property type="entry name" value="G3P_DH_NAD-dep_C"/>
</dbReference>
<dbReference type="InterPro" id="IPR011128">
    <property type="entry name" value="G3P_DH_NAD-dep_N"/>
</dbReference>
<dbReference type="InterPro" id="IPR036291">
    <property type="entry name" value="NAD(P)-bd_dom_sf"/>
</dbReference>
<dbReference type="NCBIfam" id="NF000940">
    <property type="entry name" value="PRK00094.1-2"/>
    <property type="match status" value="1"/>
</dbReference>
<dbReference type="NCBIfam" id="NF000942">
    <property type="entry name" value="PRK00094.1-4"/>
    <property type="match status" value="1"/>
</dbReference>
<dbReference type="PANTHER" id="PTHR11728">
    <property type="entry name" value="GLYCEROL-3-PHOSPHATE DEHYDROGENASE"/>
    <property type="match status" value="1"/>
</dbReference>
<dbReference type="PANTHER" id="PTHR11728:SF1">
    <property type="entry name" value="GLYCEROL-3-PHOSPHATE DEHYDROGENASE [NAD(+)] 2, CHLOROPLASTIC"/>
    <property type="match status" value="1"/>
</dbReference>
<dbReference type="Pfam" id="PF07479">
    <property type="entry name" value="NAD_Gly3P_dh_C"/>
    <property type="match status" value="1"/>
</dbReference>
<dbReference type="Pfam" id="PF01210">
    <property type="entry name" value="NAD_Gly3P_dh_N"/>
    <property type="match status" value="1"/>
</dbReference>
<dbReference type="PIRSF" id="PIRSF000114">
    <property type="entry name" value="Glycerol-3-P_dh"/>
    <property type="match status" value="1"/>
</dbReference>
<dbReference type="PRINTS" id="PR00077">
    <property type="entry name" value="GPDHDRGNASE"/>
</dbReference>
<dbReference type="SUPFAM" id="SSF48179">
    <property type="entry name" value="6-phosphogluconate dehydrogenase C-terminal domain-like"/>
    <property type="match status" value="1"/>
</dbReference>
<dbReference type="SUPFAM" id="SSF51735">
    <property type="entry name" value="NAD(P)-binding Rossmann-fold domains"/>
    <property type="match status" value="1"/>
</dbReference>
<dbReference type="PROSITE" id="PS00957">
    <property type="entry name" value="NAD_G3PDH"/>
    <property type="match status" value="1"/>
</dbReference>
<keyword id="KW-0963">Cytoplasm</keyword>
<keyword id="KW-0444">Lipid biosynthesis</keyword>
<keyword id="KW-0443">Lipid metabolism</keyword>
<keyword id="KW-0520">NAD</keyword>
<keyword id="KW-0521">NADP</keyword>
<keyword id="KW-0547">Nucleotide-binding</keyword>
<keyword id="KW-0560">Oxidoreductase</keyword>
<keyword id="KW-0594">Phospholipid biosynthesis</keyword>
<keyword id="KW-1208">Phospholipid metabolism</keyword>
<evidence type="ECO:0000255" key="1">
    <source>
        <dbReference type="HAMAP-Rule" id="MF_00394"/>
    </source>
</evidence>
<reference key="1">
    <citation type="submission" date="2006-06" db="EMBL/GenBank/DDBJ databases">
        <title>Complete sequence of chromosome of Mesorhizobium sp. BNC1.</title>
        <authorList>
            <consortium name="US DOE Joint Genome Institute"/>
            <person name="Copeland A."/>
            <person name="Lucas S."/>
            <person name="Lapidus A."/>
            <person name="Barry K."/>
            <person name="Detter J.C."/>
            <person name="Glavina del Rio T."/>
            <person name="Hammon N."/>
            <person name="Israni S."/>
            <person name="Dalin E."/>
            <person name="Tice H."/>
            <person name="Pitluck S."/>
            <person name="Chertkov O."/>
            <person name="Brettin T."/>
            <person name="Bruce D."/>
            <person name="Han C."/>
            <person name="Tapia R."/>
            <person name="Gilna P."/>
            <person name="Schmutz J."/>
            <person name="Larimer F."/>
            <person name="Land M."/>
            <person name="Hauser L."/>
            <person name="Kyrpides N."/>
            <person name="Mikhailova N."/>
            <person name="Richardson P."/>
        </authorList>
    </citation>
    <scope>NUCLEOTIDE SEQUENCE [LARGE SCALE GENOMIC DNA]</scope>
    <source>
        <strain>BNC1</strain>
    </source>
</reference>
<gene>
    <name evidence="1" type="primary">gpsA</name>
    <name type="ordered locus">Meso_3204</name>
</gene>
<accession>Q11DE9</accession>
<feature type="chain" id="PRO_0000255330" description="Glycerol-3-phosphate dehydrogenase [NAD(P)+]">
    <location>
        <begin position="1"/>
        <end position="327"/>
    </location>
</feature>
<feature type="active site" description="Proton acceptor" evidence="1">
    <location>
        <position position="192"/>
    </location>
</feature>
<feature type="binding site" evidence="1">
    <location>
        <position position="15"/>
    </location>
    <ligand>
        <name>NADPH</name>
        <dbReference type="ChEBI" id="CHEBI:57783"/>
    </ligand>
</feature>
<feature type="binding site" evidence="1">
    <location>
        <position position="35"/>
    </location>
    <ligand>
        <name>NADPH</name>
        <dbReference type="ChEBI" id="CHEBI:57783"/>
    </ligand>
</feature>
<feature type="binding site" evidence="1">
    <location>
        <position position="109"/>
    </location>
    <ligand>
        <name>NADPH</name>
        <dbReference type="ChEBI" id="CHEBI:57783"/>
    </ligand>
</feature>
<feature type="binding site" evidence="1">
    <location>
        <position position="109"/>
    </location>
    <ligand>
        <name>sn-glycerol 3-phosphate</name>
        <dbReference type="ChEBI" id="CHEBI:57597"/>
    </ligand>
</feature>
<feature type="binding site" evidence="1">
    <location>
        <position position="137"/>
    </location>
    <ligand>
        <name>sn-glycerol 3-phosphate</name>
        <dbReference type="ChEBI" id="CHEBI:57597"/>
    </ligand>
</feature>
<feature type="binding site" evidence="1">
    <location>
        <position position="139"/>
    </location>
    <ligand>
        <name>sn-glycerol 3-phosphate</name>
        <dbReference type="ChEBI" id="CHEBI:57597"/>
    </ligand>
</feature>
<feature type="binding site" evidence="1">
    <location>
        <position position="141"/>
    </location>
    <ligand>
        <name>NADPH</name>
        <dbReference type="ChEBI" id="CHEBI:57783"/>
    </ligand>
</feature>
<feature type="binding site" evidence="1">
    <location>
        <position position="192"/>
    </location>
    <ligand>
        <name>sn-glycerol 3-phosphate</name>
        <dbReference type="ChEBI" id="CHEBI:57597"/>
    </ligand>
</feature>
<feature type="binding site" evidence="1">
    <location>
        <position position="245"/>
    </location>
    <ligand>
        <name>sn-glycerol 3-phosphate</name>
        <dbReference type="ChEBI" id="CHEBI:57597"/>
    </ligand>
</feature>
<feature type="binding site" evidence="1">
    <location>
        <position position="255"/>
    </location>
    <ligand>
        <name>sn-glycerol 3-phosphate</name>
        <dbReference type="ChEBI" id="CHEBI:57597"/>
    </ligand>
</feature>
<feature type="binding site" evidence="1">
    <location>
        <position position="256"/>
    </location>
    <ligand>
        <name>NADPH</name>
        <dbReference type="ChEBI" id="CHEBI:57783"/>
    </ligand>
</feature>
<feature type="binding site" evidence="1">
    <location>
        <position position="256"/>
    </location>
    <ligand>
        <name>sn-glycerol 3-phosphate</name>
        <dbReference type="ChEBI" id="CHEBI:57597"/>
    </ligand>
</feature>
<feature type="binding site" evidence="1">
    <location>
        <position position="257"/>
    </location>
    <ligand>
        <name>sn-glycerol 3-phosphate</name>
        <dbReference type="ChEBI" id="CHEBI:57597"/>
    </ligand>
</feature>
<feature type="binding site" evidence="1">
    <location>
        <position position="275"/>
    </location>
    <ligand>
        <name>NADPH</name>
        <dbReference type="ChEBI" id="CHEBI:57783"/>
    </ligand>
</feature>
<feature type="binding site" evidence="1">
    <location>
        <position position="277"/>
    </location>
    <ligand>
        <name>NADPH</name>
        <dbReference type="ChEBI" id="CHEBI:57783"/>
    </ligand>
</feature>
<name>GPDA_CHESB</name>
<proteinExistence type="inferred from homology"/>
<comment type="function">
    <text evidence="1">Catalyzes the reduction of the glycolytic intermediate dihydroxyacetone phosphate (DHAP) to sn-glycerol 3-phosphate (G3P), the key precursor for phospholipid synthesis.</text>
</comment>
<comment type="catalytic activity">
    <reaction evidence="1">
        <text>sn-glycerol 3-phosphate + NAD(+) = dihydroxyacetone phosphate + NADH + H(+)</text>
        <dbReference type="Rhea" id="RHEA:11092"/>
        <dbReference type="ChEBI" id="CHEBI:15378"/>
        <dbReference type="ChEBI" id="CHEBI:57540"/>
        <dbReference type="ChEBI" id="CHEBI:57597"/>
        <dbReference type="ChEBI" id="CHEBI:57642"/>
        <dbReference type="ChEBI" id="CHEBI:57945"/>
        <dbReference type="EC" id="1.1.1.94"/>
    </reaction>
    <physiologicalReaction direction="right-to-left" evidence="1">
        <dbReference type="Rhea" id="RHEA:11094"/>
    </physiologicalReaction>
</comment>
<comment type="catalytic activity">
    <reaction evidence="1">
        <text>sn-glycerol 3-phosphate + NADP(+) = dihydroxyacetone phosphate + NADPH + H(+)</text>
        <dbReference type="Rhea" id="RHEA:11096"/>
        <dbReference type="ChEBI" id="CHEBI:15378"/>
        <dbReference type="ChEBI" id="CHEBI:57597"/>
        <dbReference type="ChEBI" id="CHEBI:57642"/>
        <dbReference type="ChEBI" id="CHEBI:57783"/>
        <dbReference type="ChEBI" id="CHEBI:58349"/>
        <dbReference type="EC" id="1.1.1.94"/>
    </reaction>
    <physiologicalReaction direction="right-to-left" evidence="1">
        <dbReference type="Rhea" id="RHEA:11098"/>
    </physiologicalReaction>
</comment>
<comment type="pathway">
    <text evidence="1">Membrane lipid metabolism; glycerophospholipid metabolism.</text>
</comment>
<comment type="subcellular location">
    <subcellularLocation>
        <location evidence="1">Cytoplasm</location>
    </subcellularLocation>
</comment>
<comment type="similarity">
    <text evidence="1">Belongs to the NAD-dependent glycerol-3-phosphate dehydrogenase family.</text>
</comment>
<sequence length="327" mass="33418">MSRHWTIAVLGAGAWGTALALTMQRAGHGARLWARDQNLVREINNARSNSRYLPGVKIDPAVLATDDMAAALEGADCVLAAIPAQSLRSVLAVAGTALKAHIPVVLCAKGIERETGQLMSEAARQALPENPLAALSGPSFAADLARGLPTAVTVAAQDGALAADLAKKLSAPNLRCYSSDDLMGVELGGALKNVLAIAAGATSGAGLGASAVAAITTRGFVELRRIGAAFGARAETLMGLSGLGDLILTCNSPQSRNFAYGAALGRGERLDNLPLAEGVFTASIAARMVSERGLEAPIIETVNGMLNGGLTVHAAMQALLARPLKSE</sequence>
<protein>
    <recommendedName>
        <fullName evidence="1">Glycerol-3-phosphate dehydrogenase [NAD(P)+]</fullName>
        <ecNumber evidence="1">1.1.1.94</ecNumber>
    </recommendedName>
    <alternativeName>
        <fullName evidence="1">NAD(P)(+)-dependent glycerol-3-phosphate dehydrogenase</fullName>
    </alternativeName>
    <alternativeName>
        <fullName evidence="1">NAD(P)H-dependent dihydroxyacetone-phosphate reductase</fullName>
    </alternativeName>
</protein>